<dbReference type="EC" id="1.1.1.94" evidence="1"/>
<dbReference type="EMBL" id="CP000108">
    <property type="protein sequence ID" value="ABB29274.1"/>
    <property type="molecule type" value="Genomic_DNA"/>
</dbReference>
<dbReference type="SMR" id="Q3AP01"/>
<dbReference type="STRING" id="340177.Cag_2026"/>
<dbReference type="KEGG" id="cch:Cag_2026"/>
<dbReference type="eggNOG" id="COG0240">
    <property type="taxonomic scope" value="Bacteria"/>
</dbReference>
<dbReference type="HOGENOM" id="CLU_033449_0_2_10"/>
<dbReference type="OrthoDB" id="9812273at2"/>
<dbReference type="UniPathway" id="UPA00940"/>
<dbReference type="GO" id="GO:0005829">
    <property type="term" value="C:cytosol"/>
    <property type="evidence" value="ECO:0007669"/>
    <property type="project" value="TreeGrafter"/>
</dbReference>
<dbReference type="GO" id="GO:0047952">
    <property type="term" value="F:glycerol-3-phosphate dehydrogenase [NAD(P)+] activity"/>
    <property type="evidence" value="ECO:0007669"/>
    <property type="project" value="UniProtKB-UniRule"/>
</dbReference>
<dbReference type="GO" id="GO:0051287">
    <property type="term" value="F:NAD binding"/>
    <property type="evidence" value="ECO:0007669"/>
    <property type="project" value="InterPro"/>
</dbReference>
<dbReference type="GO" id="GO:0005975">
    <property type="term" value="P:carbohydrate metabolic process"/>
    <property type="evidence" value="ECO:0007669"/>
    <property type="project" value="InterPro"/>
</dbReference>
<dbReference type="GO" id="GO:0046167">
    <property type="term" value="P:glycerol-3-phosphate biosynthetic process"/>
    <property type="evidence" value="ECO:0007669"/>
    <property type="project" value="UniProtKB-UniRule"/>
</dbReference>
<dbReference type="GO" id="GO:0046168">
    <property type="term" value="P:glycerol-3-phosphate catabolic process"/>
    <property type="evidence" value="ECO:0007669"/>
    <property type="project" value="InterPro"/>
</dbReference>
<dbReference type="GO" id="GO:0006650">
    <property type="term" value="P:glycerophospholipid metabolic process"/>
    <property type="evidence" value="ECO:0007669"/>
    <property type="project" value="UniProtKB-UniRule"/>
</dbReference>
<dbReference type="GO" id="GO:0008654">
    <property type="term" value="P:phospholipid biosynthetic process"/>
    <property type="evidence" value="ECO:0007669"/>
    <property type="project" value="UniProtKB-KW"/>
</dbReference>
<dbReference type="FunFam" id="1.10.1040.10:FF:000001">
    <property type="entry name" value="Glycerol-3-phosphate dehydrogenase [NAD(P)+]"/>
    <property type="match status" value="1"/>
</dbReference>
<dbReference type="FunFam" id="3.40.50.720:FF:000019">
    <property type="entry name" value="Glycerol-3-phosphate dehydrogenase [NAD(P)+]"/>
    <property type="match status" value="1"/>
</dbReference>
<dbReference type="Gene3D" id="1.10.1040.10">
    <property type="entry name" value="N-(1-d-carboxylethyl)-l-norvaline Dehydrogenase, domain 2"/>
    <property type="match status" value="1"/>
</dbReference>
<dbReference type="Gene3D" id="3.40.50.720">
    <property type="entry name" value="NAD(P)-binding Rossmann-like Domain"/>
    <property type="match status" value="1"/>
</dbReference>
<dbReference type="HAMAP" id="MF_00394">
    <property type="entry name" value="NAD_Glyc3P_dehydrog"/>
    <property type="match status" value="1"/>
</dbReference>
<dbReference type="InterPro" id="IPR008927">
    <property type="entry name" value="6-PGluconate_DH-like_C_sf"/>
</dbReference>
<dbReference type="InterPro" id="IPR013328">
    <property type="entry name" value="6PGD_dom2"/>
</dbReference>
<dbReference type="InterPro" id="IPR006168">
    <property type="entry name" value="G3P_DH_NAD-dep"/>
</dbReference>
<dbReference type="InterPro" id="IPR006109">
    <property type="entry name" value="G3P_DH_NAD-dep_C"/>
</dbReference>
<dbReference type="InterPro" id="IPR011128">
    <property type="entry name" value="G3P_DH_NAD-dep_N"/>
</dbReference>
<dbReference type="InterPro" id="IPR036291">
    <property type="entry name" value="NAD(P)-bd_dom_sf"/>
</dbReference>
<dbReference type="NCBIfam" id="NF000940">
    <property type="entry name" value="PRK00094.1-2"/>
    <property type="match status" value="1"/>
</dbReference>
<dbReference type="NCBIfam" id="NF000941">
    <property type="entry name" value="PRK00094.1-3"/>
    <property type="match status" value="1"/>
</dbReference>
<dbReference type="NCBIfam" id="NF000942">
    <property type="entry name" value="PRK00094.1-4"/>
    <property type="match status" value="1"/>
</dbReference>
<dbReference type="PANTHER" id="PTHR11728">
    <property type="entry name" value="GLYCEROL-3-PHOSPHATE DEHYDROGENASE"/>
    <property type="match status" value="1"/>
</dbReference>
<dbReference type="PANTHER" id="PTHR11728:SF1">
    <property type="entry name" value="GLYCEROL-3-PHOSPHATE DEHYDROGENASE [NAD(+)] 2, CHLOROPLASTIC"/>
    <property type="match status" value="1"/>
</dbReference>
<dbReference type="Pfam" id="PF07479">
    <property type="entry name" value="NAD_Gly3P_dh_C"/>
    <property type="match status" value="1"/>
</dbReference>
<dbReference type="Pfam" id="PF01210">
    <property type="entry name" value="NAD_Gly3P_dh_N"/>
    <property type="match status" value="1"/>
</dbReference>
<dbReference type="PIRSF" id="PIRSF000114">
    <property type="entry name" value="Glycerol-3-P_dh"/>
    <property type="match status" value="1"/>
</dbReference>
<dbReference type="PRINTS" id="PR00077">
    <property type="entry name" value="GPDHDRGNASE"/>
</dbReference>
<dbReference type="SUPFAM" id="SSF48179">
    <property type="entry name" value="6-phosphogluconate dehydrogenase C-terminal domain-like"/>
    <property type="match status" value="1"/>
</dbReference>
<dbReference type="SUPFAM" id="SSF51735">
    <property type="entry name" value="NAD(P)-binding Rossmann-fold domains"/>
    <property type="match status" value="1"/>
</dbReference>
<dbReference type="PROSITE" id="PS00957">
    <property type="entry name" value="NAD_G3PDH"/>
    <property type="match status" value="1"/>
</dbReference>
<sequence length="333" mass="36196">MTIAVLGAGSWGTTLAVLLARKEYEVRLWAHRSEFATALEQERENRRYLNGVHFPDSLHIVATLPELIAWAEVIVTAVPAQALRETVRAFRDIPLEGKIVVNVAKGIELGTGMRMSEVLLDELPQLQLSQVVALYGPSHAEEVSKEQPTTVVASSPSRNAAETVQELFHTNRFRVYINTDIIGVEVAGSVKNIIAIAAGISDGLGFGDNAKAAIITRGLAEISRLCTKLGGDAMTLSGLSGIGDLVVTCLSHHSRNRHVGEEIGKGRTLEEIIHSMSMIAEGVHSSKAVYELSRKVGVDMPITRAVYEMLFEAKPAAQAILDLMNRDPRSERD</sequence>
<reference key="1">
    <citation type="submission" date="2005-08" db="EMBL/GenBank/DDBJ databases">
        <title>Complete sequence of Chlorobium chlorochromatii CaD3.</title>
        <authorList>
            <consortium name="US DOE Joint Genome Institute"/>
            <person name="Copeland A."/>
            <person name="Lucas S."/>
            <person name="Lapidus A."/>
            <person name="Barry K."/>
            <person name="Detter J.C."/>
            <person name="Glavina T."/>
            <person name="Hammon N."/>
            <person name="Israni S."/>
            <person name="Pitluck S."/>
            <person name="Bryant D."/>
            <person name="Schmutz J."/>
            <person name="Larimer F."/>
            <person name="Land M."/>
            <person name="Kyrpides N."/>
            <person name="Ivanova N."/>
            <person name="Richardson P."/>
        </authorList>
    </citation>
    <scope>NUCLEOTIDE SEQUENCE [LARGE SCALE GENOMIC DNA]</scope>
    <source>
        <strain>CaD3</strain>
    </source>
</reference>
<accession>Q3AP01</accession>
<keyword id="KW-0963">Cytoplasm</keyword>
<keyword id="KW-0444">Lipid biosynthesis</keyword>
<keyword id="KW-0443">Lipid metabolism</keyword>
<keyword id="KW-0520">NAD</keyword>
<keyword id="KW-0521">NADP</keyword>
<keyword id="KW-0547">Nucleotide-binding</keyword>
<keyword id="KW-0560">Oxidoreductase</keyword>
<keyword id="KW-0594">Phospholipid biosynthesis</keyword>
<keyword id="KW-1208">Phospholipid metabolism</keyword>
<organism>
    <name type="scientific">Chlorobium chlorochromatii (strain CaD3)</name>
    <dbReference type="NCBI Taxonomy" id="340177"/>
    <lineage>
        <taxon>Bacteria</taxon>
        <taxon>Pseudomonadati</taxon>
        <taxon>Chlorobiota</taxon>
        <taxon>Chlorobiia</taxon>
        <taxon>Chlorobiales</taxon>
        <taxon>Chlorobiaceae</taxon>
        <taxon>Chlorobium/Pelodictyon group</taxon>
        <taxon>Chlorobium</taxon>
    </lineage>
</organism>
<protein>
    <recommendedName>
        <fullName evidence="1">Glycerol-3-phosphate dehydrogenase [NAD(P)+]</fullName>
        <ecNumber evidence="1">1.1.1.94</ecNumber>
    </recommendedName>
    <alternativeName>
        <fullName evidence="1">NAD(P)(+)-dependent glycerol-3-phosphate dehydrogenase</fullName>
    </alternativeName>
    <alternativeName>
        <fullName evidence="1">NAD(P)H-dependent dihydroxyacetone-phosphate reductase</fullName>
    </alternativeName>
</protein>
<feature type="chain" id="PRO_0000255298" description="Glycerol-3-phosphate dehydrogenase [NAD(P)+]">
    <location>
        <begin position="1"/>
        <end position="333"/>
    </location>
</feature>
<feature type="active site" description="Proton acceptor" evidence="1">
    <location>
        <position position="191"/>
    </location>
</feature>
<feature type="binding site" evidence="1">
    <location>
        <position position="10"/>
    </location>
    <ligand>
        <name>NADPH</name>
        <dbReference type="ChEBI" id="CHEBI:57783"/>
    </ligand>
</feature>
<feature type="binding site" evidence="1">
    <location>
        <position position="11"/>
    </location>
    <ligand>
        <name>NADPH</name>
        <dbReference type="ChEBI" id="CHEBI:57783"/>
    </ligand>
</feature>
<feature type="binding site" evidence="1">
    <location>
        <position position="31"/>
    </location>
    <ligand>
        <name>NADPH</name>
        <dbReference type="ChEBI" id="CHEBI:57783"/>
    </ligand>
</feature>
<feature type="binding site" evidence="1">
    <location>
        <position position="32"/>
    </location>
    <ligand>
        <name>NADPH</name>
        <dbReference type="ChEBI" id="CHEBI:57783"/>
    </ligand>
</feature>
<feature type="binding site" evidence="1">
    <location>
        <position position="105"/>
    </location>
    <ligand>
        <name>NADPH</name>
        <dbReference type="ChEBI" id="CHEBI:57783"/>
    </ligand>
</feature>
<feature type="binding site" evidence="1">
    <location>
        <position position="105"/>
    </location>
    <ligand>
        <name>sn-glycerol 3-phosphate</name>
        <dbReference type="ChEBI" id="CHEBI:57597"/>
    </ligand>
</feature>
<feature type="binding site" evidence="1">
    <location>
        <position position="136"/>
    </location>
    <ligand>
        <name>sn-glycerol 3-phosphate</name>
        <dbReference type="ChEBI" id="CHEBI:57597"/>
    </ligand>
</feature>
<feature type="binding site" evidence="1">
    <location>
        <position position="138"/>
    </location>
    <ligand>
        <name>sn-glycerol 3-phosphate</name>
        <dbReference type="ChEBI" id="CHEBI:57597"/>
    </ligand>
</feature>
<feature type="binding site" evidence="1">
    <location>
        <position position="140"/>
    </location>
    <ligand>
        <name>NADPH</name>
        <dbReference type="ChEBI" id="CHEBI:57783"/>
    </ligand>
</feature>
<feature type="binding site" evidence="1">
    <location>
        <position position="191"/>
    </location>
    <ligand>
        <name>sn-glycerol 3-phosphate</name>
        <dbReference type="ChEBI" id="CHEBI:57597"/>
    </ligand>
</feature>
<feature type="binding site" evidence="1">
    <location>
        <position position="244"/>
    </location>
    <ligand>
        <name>sn-glycerol 3-phosphate</name>
        <dbReference type="ChEBI" id="CHEBI:57597"/>
    </ligand>
</feature>
<feature type="binding site" evidence="1">
    <location>
        <position position="254"/>
    </location>
    <ligand>
        <name>sn-glycerol 3-phosphate</name>
        <dbReference type="ChEBI" id="CHEBI:57597"/>
    </ligand>
</feature>
<feature type="binding site" evidence="1">
    <location>
        <position position="255"/>
    </location>
    <ligand>
        <name>NADPH</name>
        <dbReference type="ChEBI" id="CHEBI:57783"/>
    </ligand>
</feature>
<feature type="binding site" evidence="1">
    <location>
        <position position="255"/>
    </location>
    <ligand>
        <name>sn-glycerol 3-phosphate</name>
        <dbReference type="ChEBI" id="CHEBI:57597"/>
    </ligand>
</feature>
<feature type="binding site" evidence="1">
    <location>
        <position position="256"/>
    </location>
    <ligand>
        <name>sn-glycerol 3-phosphate</name>
        <dbReference type="ChEBI" id="CHEBI:57597"/>
    </ligand>
</feature>
<feature type="binding site" evidence="1">
    <location>
        <position position="279"/>
    </location>
    <ligand>
        <name>NADPH</name>
        <dbReference type="ChEBI" id="CHEBI:57783"/>
    </ligand>
</feature>
<feature type="binding site" evidence="1">
    <location>
        <position position="281"/>
    </location>
    <ligand>
        <name>NADPH</name>
        <dbReference type="ChEBI" id="CHEBI:57783"/>
    </ligand>
</feature>
<name>GPDA_CHLCH</name>
<gene>
    <name evidence="1" type="primary">gpsA</name>
    <name type="ordered locus">Cag_2026</name>
</gene>
<comment type="function">
    <text evidence="1">Catalyzes the reduction of the glycolytic intermediate dihydroxyacetone phosphate (DHAP) to sn-glycerol 3-phosphate (G3P), the key precursor for phospholipid synthesis.</text>
</comment>
<comment type="catalytic activity">
    <reaction evidence="1">
        <text>sn-glycerol 3-phosphate + NAD(+) = dihydroxyacetone phosphate + NADH + H(+)</text>
        <dbReference type="Rhea" id="RHEA:11092"/>
        <dbReference type="ChEBI" id="CHEBI:15378"/>
        <dbReference type="ChEBI" id="CHEBI:57540"/>
        <dbReference type="ChEBI" id="CHEBI:57597"/>
        <dbReference type="ChEBI" id="CHEBI:57642"/>
        <dbReference type="ChEBI" id="CHEBI:57945"/>
        <dbReference type="EC" id="1.1.1.94"/>
    </reaction>
    <physiologicalReaction direction="right-to-left" evidence="1">
        <dbReference type="Rhea" id="RHEA:11094"/>
    </physiologicalReaction>
</comment>
<comment type="catalytic activity">
    <reaction evidence="1">
        <text>sn-glycerol 3-phosphate + NADP(+) = dihydroxyacetone phosphate + NADPH + H(+)</text>
        <dbReference type="Rhea" id="RHEA:11096"/>
        <dbReference type="ChEBI" id="CHEBI:15378"/>
        <dbReference type="ChEBI" id="CHEBI:57597"/>
        <dbReference type="ChEBI" id="CHEBI:57642"/>
        <dbReference type="ChEBI" id="CHEBI:57783"/>
        <dbReference type="ChEBI" id="CHEBI:58349"/>
        <dbReference type="EC" id="1.1.1.94"/>
    </reaction>
    <physiologicalReaction direction="right-to-left" evidence="1">
        <dbReference type="Rhea" id="RHEA:11098"/>
    </physiologicalReaction>
</comment>
<comment type="pathway">
    <text evidence="1">Membrane lipid metabolism; glycerophospholipid metabolism.</text>
</comment>
<comment type="subcellular location">
    <subcellularLocation>
        <location evidence="1">Cytoplasm</location>
    </subcellularLocation>
</comment>
<comment type="similarity">
    <text evidence="1">Belongs to the NAD-dependent glycerol-3-phosphate dehydrogenase family.</text>
</comment>
<evidence type="ECO:0000255" key="1">
    <source>
        <dbReference type="HAMAP-Rule" id="MF_00394"/>
    </source>
</evidence>
<proteinExistence type="inferred from homology"/>